<evidence type="ECO:0000255" key="1"/>
<evidence type="ECO:0000269" key="2">
    <source>
    </source>
</evidence>
<evidence type="ECO:0000269" key="3">
    <source>
    </source>
</evidence>
<evidence type="ECO:0000269" key="4">
    <source>
    </source>
</evidence>
<evidence type="ECO:0000305" key="5"/>
<evidence type="ECO:0000305" key="6">
    <source>
    </source>
</evidence>
<feature type="signal peptide" evidence="1">
    <location>
        <begin position="1"/>
        <end position="21"/>
    </location>
</feature>
<feature type="chain" id="PRO_0000430280" description="Protein EXORDIUM">
    <location>
        <begin position="22"/>
        <end position="314"/>
    </location>
</feature>
<feature type="sequence conflict" description="In Ref. 5; AAM64992." evidence="5" ref="5">
    <original>L</original>
    <variation>S</variation>
    <location>
        <position position="3"/>
    </location>
</feature>
<sequence length="314" mass="33599">MYLLVFKLFLFLSLLQISVSARNLASQEPNQFQLLKYHKGALLSGKISVNLIWYGKFKPSQRAIISDFITSLTHTSPTSKTLHQPSVATWWKTTEKYYKLATPSKNSSPLSLTLGKQIIDESCSLGKSLTDKKIQTLASKGDQRNAINVVLTSADVTVTGFGMSRCGTHGHARGLGKRGSKFAYIWVGNSETQCPGQCAWPFHAPVYGPQSPPLVAPNNDVGLDGMVINLASLLAGTATNPFGNGYYQGPQNAPLEAASACPGVYGKGAYPGYAGDLLVDTTTGGSFNAYGANGRKFLLPALYDPTTSACSTMV</sequence>
<comment type="function">
    <text evidence="3 4">Required for cell expansion in leaves. May mediate brassinosteroid (BR)-induced leaf growth. May play a role in the control of BR responses in roots. May be involved in signaling processes that coordinate BR responses with environmental or developmental signals.</text>
</comment>
<comment type="subcellular location">
    <subcellularLocation>
        <location evidence="4">Secreted</location>
    </subcellularLocation>
    <subcellularLocation>
        <location evidence="4">Secreted</location>
        <location evidence="4">Extracellular space</location>
    </subcellularLocation>
    <subcellularLocation>
        <location evidence="4">Secreted</location>
        <location evidence="4">Extracellular space</location>
        <location evidence="4">Apoplast</location>
    </subcellularLocation>
</comment>
<comment type="tissue specificity">
    <text evidence="2">Expressed in root tips, vascular tissue of roots, shoot apex, rosette leaves and embryos.</text>
</comment>
<comment type="induction">
    <text evidence="2 3">By the synthetic auxin naphthaleneacetic acid (NAA) and 24-epibrassinolide. Down-regulated by kinetin.</text>
</comment>
<comment type="disruption phenotype">
    <text evidence="4">Reduced leaf size, root length and biomass production due to diminished expansion of epidermis and parenchyma cells.</text>
</comment>
<comment type="miscellaneous">
    <text evidence="6">Over-expression of EXO promotes growth in both shoots and roots.</text>
</comment>
<comment type="similarity">
    <text evidence="5">Belongs to the EXORDIUM family.</text>
</comment>
<protein>
    <recommendedName>
        <fullName>Protein EXORDIUM</fullName>
    </recommendedName>
</protein>
<gene>
    <name type="primary">EXO</name>
    <name type="ordered locus">At4g08950</name>
    <name type="ORF">T3H13.3</name>
</gene>
<organism>
    <name type="scientific">Arabidopsis thaliana</name>
    <name type="common">Mouse-ear cress</name>
    <dbReference type="NCBI Taxonomy" id="3702"/>
    <lineage>
        <taxon>Eukaryota</taxon>
        <taxon>Viridiplantae</taxon>
        <taxon>Streptophyta</taxon>
        <taxon>Embryophyta</taxon>
        <taxon>Tracheophyta</taxon>
        <taxon>Spermatophyta</taxon>
        <taxon>Magnoliopsida</taxon>
        <taxon>eudicotyledons</taxon>
        <taxon>Gunneridae</taxon>
        <taxon>Pentapetalae</taxon>
        <taxon>rosids</taxon>
        <taxon>malvids</taxon>
        <taxon>Brassicales</taxon>
        <taxon>Brassicaceae</taxon>
        <taxon>Camelineae</taxon>
        <taxon>Arabidopsis</taxon>
    </lineage>
</organism>
<dbReference type="EMBL" id="AF496655">
    <property type="protein sequence ID" value="AAM18526.1"/>
    <property type="molecule type" value="mRNA"/>
</dbReference>
<dbReference type="EMBL" id="AF128396">
    <property type="protein sequence ID" value="AAD17365.1"/>
    <property type="molecule type" value="Genomic_DNA"/>
</dbReference>
<dbReference type="EMBL" id="AL161513">
    <property type="protein sequence ID" value="CAB78019.1"/>
    <property type="molecule type" value="Genomic_DNA"/>
</dbReference>
<dbReference type="EMBL" id="CP002687">
    <property type="protein sequence ID" value="AEE82700.1"/>
    <property type="molecule type" value="Genomic_DNA"/>
</dbReference>
<dbReference type="EMBL" id="AY054486">
    <property type="protein sequence ID" value="AAK96677.1"/>
    <property type="molecule type" value="mRNA"/>
</dbReference>
<dbReference type="EMBL" id="AY093295">
    <property type="protein sequence ID" value="AAM13294.1"/>
    <property type="molecule type" value="mRNA"/>
</dbReference>
<dbReference type="EMBL" id="AY087446">
    <property type="protein sequence ID" value="AAM64992.1"/>
    <property type="molecule type" value="mRNA"/>
</dbReference>
<dbReference type="PIR" id="C85090">
    <property type="entry name" value="C85090"/>
</dbReference>
<dbReference type="RefSeq" id="NP_192634.1">
    <property type="nucleotide sequence ID" value="NM_116964.3"/>
</dbReference>
<dbReference type="BioGRID" id="11772">
    <property type="interactions" value="1"/>
</dbReference>
<dbReference type="FunCoup" id="Q9ZPE7">
    <property type="interactions" value="4"/>
</dbReference>
<dbReference type="IntAct" id="Q9ZPE7">
    <property type="interactions" value="1"/>
</dbReference>
<dbReference type="STRING" id="3702.Q9ZPE7"/>
<dbReference type="PaxDb" id="3702-AT4G08950.1"/>
<dbReference type="ProteomicsDB" id="222303"/>
<dbReference type="EnsemblPlants" id="AT4G08950.1">
    <property type="protein sequence ID" value="AT4G08950.1"/>
    <property type="gene ID" value="AT4G08950"/>
</dbReference>
<dbReference type="GeneID" id="826473"/>
<dbReference type="Gramene" id="AT4G08950.1">
    <property type="protein sequence ID" value="AT4G08950.1"/>
    <property type="gene ID" value="AT4G08950"/>
</dbReference>
<dbReference type="KEGG" id="ath:AT4G08950"/>
<dbReference type="Araport" id="AT4G08950"/>
<dbReference type="TAIR" id="AT4G08950">
    <property type="gene designation" value="EXO"/>
</dbReference>
<dbReference type="eggNOG" id="KOG0017">
    <property type="taxonomic scope" value="Eukaryota"/>
</dbReference>
<dbReference type="HOGENOM" id="CLU_053777_1_0_1"/>
<dbReference type="InParanoid" id="Q9ZPE7"/>
<dbReference type="OMA" id="RCGTHGY"/>
<dbReference type="PhylomeDB" id="Q9ZPE7"/>
<dbReference type="CD-CODE" id="4299E36E">
    <property type="entry name" value="Nucleolus"/>
</dbReference>
<dbReference type="PRO" id="PR:Q9ZPE7"/>
<dbReference type="Proteomes" id="UP000006548">
    <property type="component" value="Chromosome 4"/>
</dbReference>
<dbReference type="ExpressionAtlas" id="Q9ZPE7">
    <property type="expression patterns" value="baseline and differential"/>
</dbReference>
<dbReference type="GO" id="GO:0048046">
    <property type="term" value="C:apoplast"/>
    <property type="evidence" value="ECO:0007669"/>
    <property type="project" value="UniProtKB-SubCell"/>
</dbReference>
<dbReference type="GO" id="GO:0005794">
    <property type="term" value="C:Golgi apparatus"/>
    <property type="evidence" value="ECO:0007005"/>
    <property type="project" value="TAIR"/>
</dbReference>
<dbReference type="GO" id="GO:0009505">
    <property type="term" value="C:plant-type cell wall"/>
    <property type="evidence" value="ECO:0000314"/>
    <property type="project" value="TAIR"/>
</dbReference>
<dbReference type="GO" id="GO:0009741">
    <property type="term" value="P:response to brassinosteroid"/>
    <property type="evidence" value="ECO:0000315"/>
    <property type="project" value="TAIR"/>
</dbReference>
<dbReference type="InterPro" id="IPR006766">
    <property type="entry name" value="EXORDIUM-like"/>
</dbReference>
<dbReference type="PANTHER" id="PTHR31279">
    <property type="entry name" value="PROTEIN EXORDIUM-LIKE 5"/>
    <property type="match status" value="1"/>
</dbReference>
<dbReference type="PANTHER" id="PTHR31279:SF54">
    <property type="entry name" value="PROTEIN EXORDIUM-RELATED"/>
    <property type="match status" value="1"/>
</dbReference>
<dbReference type="Pfam" id="PF04674">
    <property type="entry name" value="Phi_1"/>
    <property type="match status" value="1"/>
</dbReference>
<reference key="1">
    <citation type="journal article" date="2003" name="Plant J.">
        <title>EXORDIUM--a gene expressed in proliferating cells and with a role in meristem function, identified by promoter trapping in Arabidopsis.</title>
        <authorList>
            <person name="Farrar K."/>
            <person name="Evans I.M."/>
            <person name="Topping J.F."/>
            <person name="Souter M.A."/>
            <person name="Nielsen J.E."/>
            <person name="Lindsey K."/>
        </authorList>
    </citation>
    <scope>NUCLEOTIDE SEQUENCE [MRNA]</scope>
    <scope>TISSUE SPECIFICITY</scope>
    <scope>INDUCTION</scope>
</reference>
<reference key="2">
    <citation type="journal article" date="1999" name="Nature">
        <title>Sequence and analysis of chromosome 4 of the plant Arabidopsis thaliana.</title>
        <authorList>
            <person name="Mayer K.F.X."/>
            <person name="Schueller C."/>
            <person name="Wambutt R."/>
            <person name="Murphy G."/>
            <person name="Volckaert G."/>
            <person name="Pohl T."/>
            <person name="Duesterhoeft A."/>
            <person name="Stiekema W."/>
            <person name="Entian K.-D."/>
            <person name="Terryn N."/>
            <person name="Harris B."/>
            <person name="Ansorge W."/>
            <person name="Brandt P."/>
            <person name="Grivell L.A."/>
            <person name="Rieger M."/>
            <person name="Weichselgartner M."/>
            <person name="de Simone V."/>
            <person name="Obermaier B."/>
            <person name="Mache R."/>
            <person name="Mueller M."/>
            <person name="Kreis M."/>
            <person name="Delseny M."/>
            <person name="Puigdomenech P."/>
            <person name="Watson M."/>
            <person name="Schmidtheini T."/>
            <person name="Reichert B."/>
            <person name="Portetelle D."/>
            <person name="Perez-Alonso M."/>
            <person name="Boutry M."/>
            <person name="Bancroft I."/>
            <person name="Vos P."/>
            <person name="Hoheisel J."/>
            <person name="Zimmermann W."/>
            <person name="Wedler H."/>
            <person name="Ridley P."/>
            <person name="Langham S.-A."/>
            <person name="McCullagh B."/>
            <person name="Bilham L."/>
            <person name="Robben J."/>
            <person name="van der Schueren J."/>
            <person name="Grymonprez B."/>
            <person name="Chuang Y.-J."/>
            <person name="Vandenbussche F."/>
            <person name="Braeken M."/>
            <person name="Weltjens I."/>
            <person name="Voet M."/>
            <person name="Bastiaens I."/>
            <person name="Aert R."/>
            <person name="Defoor E."/>
            <person name="Weitzenegger T."/>
            <person name="Bothe G."/>
            <person name="Ramsperger U."/>
            <person name="Hilbert H."/>
            <person name="Braun M."/>
            <person name="Holzer E."/>
            <person name="Brandt A."/>
            <person name="Peters S."/>
            <person name="van Staveren M."/>
            <person name="Dirkse W."/>
            <person name="Mooijman P."/>
            <person name="Klein Lankhorst R."/>
            <person name="Rose M."/>
            <person name="Hauf J."/>
            <person name="Koetter P."/>
            <person name="Berneiser S."/>
            <person name="Hempel S."/>
            <person name="Feldpausch M."/>
            <person name="Lamberth S."/>
            <person name="Van den Daele H."/>
            <person name="De Keyser A."/>
            <person name="Buysshaert C."/>
            <person name="Gielen J."/>
            <person name="Villarroel R."/>
            <person name="De Clercq R."/>
            <person name="van Montagu M."/>
            <person name="Rogers J."/>
            <person name="Cronin A."/>
            <person name="Quail M.A."/>
            <person name="Bray-Allen S."/>
            <person name="Clark L."/>
            <person name="Doggett J."/>
            <person name="Hall S."/>
            <person name="Kay M."/>
            <person name="Lennard N."/>
            <person name="McLay K."/>
            <person name="Mayes R."/>
            <person name="Pettett A."/>
            <person name="Rajandream M.A."/>
            <person name="Lyne M."/>
            <person name="Benes V."/>
            <person name="Rechmann S."/>
            <person name="Borkova D."/>
            <person name="Bloecker H."/>
            <person name="Scharfe M."/>
            <person name="Grimm M."/>
            <person name="Loehnert T.-H."/>
            <person name="Dose S."/>
            <person name="de Haan M."/>
            <person name="Maarse A.C."/>
            <person name="Schaefer M."/>
            <person name="Mueller-Auer S."/>
            <person name="Gabel C."/>
            <person name="Fuchs M."/>
            <person name="Fartmann B."/>
            <person name="Granderath K."/>
            <person name="Dauner D."/>
            <person name="Herzl A."/>
            <person name="Neumann S."/>
            <person name="Argiriou A."/>
            <person name="Vitale D."/>
            <person name="Liguori R."/>
            <person name="Piravandi E."/>
            <person name="Massenet O."/>
            <person name="Quigley F."/>
            <person name="Clabauld G."/>
            <person name="Muendlein A."/>
            <person name="Felber R."/>
            <person name="Schnabl S."/>
            <person name="Hiller R."/>
            <person name="Schmidt W."/>
            <person name="Lecharny A."/>
            <person name="Aubourg S."/>
            <person name="Chefdor F."/>
            <person name="Cooke R."/>
            <person name="Berger C."/>
            <person name="Monfort A."/>
            <person name="Casacuberta E."/>
            <person name="Gibbons T."/>
            <person name="Weber N."/>
            <person name="Vandenbol M."/>
            <person name="Bargues M."/>
            <person name="Terol J."/>
            <person name="Torres A."/>
            <person name="Perez-Perez A."/>
            <person name="Purnelle B."/>
            <person name="Bent E."/>
            <person name="Johnson S."/>
            <person name="Tacon D."/>
            <person name="Jesse T."/>
            <person name="Heijnen L."/>
            <person name="Schwarz S."/>
            <person name="Scholler P."/>
            <person name="Heber S."/>
            <person name="Francs P."/>
            <person name="Bielke C."/>
            <person name="Frishman D."/>
            <person name="Haase D."/>
            <person name="Lemcke K."/>
            <person name="Mewes H.-W."/>
            <person name="Stocker S."/>
            <person name="Zaccaria P."/>
            <person name="Bevan M."/>
            <person name="Wilson R.K."/>
            <person name="de la Bastide M."/>
            <person name="Habermann K."/>
            <person name="Parnell L."/>
            <person name="Dedhia N."/>
            <person name="Gnoj L."/>
            <person name="Schutz K."/>
            <person name="Huang E."/>
            <person name="Spiegel L."/>
            <person name="Sekhon M."/>
            <person name="Murray J."/>
            <person name="Sheet P."/>
            <person name="Cordes M."/>
            <person name="Abu-Threideh J."/>
            <person name="Stoneking T."/>
            <person name="Kalicki J."/>
            <person name="Graves T."/>
            <person name="Harmon G."/>
            <person name="Edwards J."/>
            <person name="Latreille P."/>
            <person name="Courtney L."/>
            <person name="Cloud J."/>
            <person name="Abbott A."/>
            <person name="Scott K."/>
            <person name="Johnson D."/>
            <person name="Minx P."/>
            <person name="Bentley D."/>
            <person name="Fulton B."/>
            <person name="Miller N."/>
            <person name="Greco T."/>
            <person name="Kemp K."/>
            <person name="Kramer J."/>
            <person name="Fulton L."/>
            <person name="Mardis E."/>
            <person name="Dante M."/>
            <person name="Pepin K."/>
            <person name="Hillier L.W."/>
            <person name="Nelson J."/>
            <person name="Spieth J."/>
            <person name="Ryan E."/>
            <person name="Andrews S."/>
            <person name="Geisel C."/>
            <person name="Layman D."/>
            <person name="Du H."/>
            <person name="Ali J."/>
            <person name="Berghoff A."/>
            <person name="Jones K."/>
            <person name="Drone K."/>
            <person name="Cotton M."/>
            <person name="Joshu C."/>
            <person name="Antonoiu B."/>
            <person name="Zidanic M."/>
            <person name="Strong C."/>
            <person name="Sun H."/>
            <person name="Lamar B."/>
            <person name="Yordan C."/>
            <person name="Ma P."/>
            <person name="Zhong J."/>
            <person name="Preston R."/>
            <person name="Vil D."/>
            <person name="Shekher M."/>
            <person name="Matero A."/>
            <person name="Shah R."/>
            <person name="Swaby I.K."/>
            <person name="O'Shaughnessy A."/>
            <person name="Rodriguez M."/>
            <person name="Hoffman J."/>
            <person name="Till S."/>
            <person name="Granat S."/>
            <person name="Shohdy N."/>
            <person name="Hasegawa A."/>
            <person name="Hameed A."/>
            <person name="Lodhi M."/>
            <person name="Johnson A."/>
            <person name="Chen E."/>
            <person name="Marra M.A."/>
            <person name="Martienssen R."/>
            <person name="McCombie W.R."/>
        </authorList>
    </citation>
    <scope>NUCLEOTIDE SEQUENCE [LARGE SCALE GENOMIC DNA]</scope>
    <source>
        <strain>cv. Columbia</strain>
    </source>
</reference>
<reference key="3">
    <citation type="journal article" date="2017" name="Plant J.">
        <title>Araport11: a complete reannotation of the Arabidopsis thaliana reference genome.</title>
        <authorList>
            <person name="Cheng C.Y."/>
            <person name="Krishnakumar V."/>
            <person name="Chan A.P."/>
            <person name="Thibaud-Nissen F."/>
            <person name="Schobel S."/>
            <person name="Town C.D."/>
        </authorList>
    </citation>
    <scope>GENOME REANNOTATION</scope>
    <source>
        <strain>cv. Columbia</strain>
    </source>
</reference>
<reference key="4">
    <citation type="journal article" date="2003" name="Science">
        <title>Empirical analysis of transcriptional activity in the Arabidopsis genome.</title>
        <authorList>
            <person name="Yamada K."/>
            <person name="Lim J."/>
            <person name="Dale J.M."/>
            <person name="Chen H."/>
            <person name="Shinn P."/>
            <person name="Palm C.J."/>
            <person name="Southwick A.M."/>
            <person name="Wu H.C."/>
            <person name="Kim C.J."/>
            <person name="Nguyen M."/>
            <person name="Pham P.K."/>
            <person name="Cheuk R.F."/>
            <person name="Karlin-Newmann G."/>
            <person name="Liu S.X."/>
            <person name="Lam B."/>
            <person name="Sakano H."/>
            <person name="Wu T."/>
            <person name="Yu G."/>
            <person name="Miranda M."/>
            <person name="Quach H.L."/>
            <person name="Tripp M."/>
            <person name="Chang C.H."/>
            <person name="Lee J.M."/>
            <person name="Toriumi M.J."/>
            <person name="Chan M.M."/>
            <person name="Tang C.C."/>
            <person name="Onodera C.S."/>
            <person name="Deng J.M."/>
            <person name="Akiyama K."/>
            <person name="Ansari Y."/>
            <person name="Arakawa T."/>
            <person name="Banh J."/>
            <person name="Banno F."/>
            <person name="Bowser L."/>
            <person name="Brooks S.Y."/>
            <person name="Carninci P."/>
            <person name="Chao Q."/>
            <person name="Choy N."/>
            <person name="Enju A."/>
            <person name="Goldsmith A.D."/>
            <person name="Gurjal M."/>
            <person name="Hansen N.F."/>
            <person name="Hayashizaki Y."/>
            <person name="Johnson-Hopson C."/>
            <person name="Hsuan V.W."/>
            <person name="Iida K."/>
            <person name="Karnes M."/>
            <person name="Khan S."/>
            <person name="Koesema E."/>
            <person name="Ishida J."/>
            <person name="Jiang P.X."/>
            <person name="Jones T."/>
            <person name="Kawai J."/>
            <person name="Kamiya A."/>
            <person name="Meyers C."/>
            <person name="Nakajima M."/>
            <person name="Narusaka M."/>
            <person name="Seki M."/>
            <person name="Sakurai T."/>
            <person name="Satou M."/>
            <person name="Tamse R."/>
            <person name="Vaysberg M."/>
            <person name="Wallender E.K."/>
            <person name="Wong C."/>
            <person name="Yamamura Y."/>
            <person name="Yuan S."/>
            <person name="Shinozaki K."/>
            <person name="Davis R.W."/>
            <person name="Theologis A."/>
            <person name="Ecker J.R."/>
        </authorList>
    </citation>
    <scope>NUCLEOTIDE SEQUENCE [LARGE SCALE MRNA]</scope>
    <source>
        <strain>cv. Columbia</strain>
    </source>
</reference>
<reference key="5">
    <citation type="submission" date="2002-03" db="EMBL/GenBank/DDBJ databases">
        <title>Full-length cDNA from Arabidopsis thaliana.</title>
        <authorList>
            <person name="Brover V.V."/>
            <person name="Troukhan M.E."/>
            <person name="Alexandrov N.A."/>
            <person name="Lu Y.-P."/>
            <person name="Flavell R.B."/>
            <person name="Feldmann K.A."/>
        </authorList>
    </citation>
    <scope>NUCLEOTIDE SEQUENCE [LARGE SCALE MRNA]</scope>
</reference>
<reference key="6">
    <citation type="journal article" date="2004" name="FEBS Lett.">
        <title>EXORDIUM regulates brassinosteroid-responsive genes.</title>
        <authorList>
            <person name="Coll-Garcia D."/>
            <person name="Mazuch J."/>
            <person name="Altmann T."/>
            <person name="Mussig C."/>
        </authorList>
    </citation>
    <scope>FUNCTION</scope>
    <scope>INDUCTION BY EPIBRASSINOLIDE</scope>
</reference>
<reference key="7">
    <citation type="journal article" date="2009" name="BMC Plant Biol.">
        <title>The extracellular EXO protein mediates cell expansion in Arabidopsis leaves.</title>
        <authorList>
            <person name="Schroder F."/>
            <person name="Lisso J."/>
            <person name="Lange P."/>
            <person name="Mussig C."/>
        </authorList>
    </citation>
    <scope>FUNCTION</scope>
    <scope>SUBCELLULAR LOCATION</scope>
    <scope>GENE FAMILY</scope>
    <scope>NOMENCLATURE</scope>
    <scope>DISRUPTION PHENOTYPE</scope>
</reference>
<accession>Q9ZPE7</accession>
<accession>Q8LB34</accession>
<proteinExistence type="evidence at transcript level"/>
<name>EXO_ARATH</name>
<keyword id="KW-0052">Apoplast</keyword>
<keyword id="KW-1185">Reference proteome</keyword>
<keyword id="KW-0964">Secreted</keyword>
<keyword id="KW-0732">Signal</keyword>